<accession>Q89DC5</accession>
<protein>
    <recommendedName>
        <fullName evidence="1">Tetraacyldisaccharide 4'-kinase</fullName>
        <ecNumber evidence="1">2.7.1.130</ecNumber>
    </recommendedName>
    <alternativeName>
        <fullName evidence="1">Lipid A 4'-kinase</fullName>
    </alternativeName>
</protein>
<keyword id="KW-0067">ATP-binding</keyword>
<keyword id="KW-0418">Kinase</keyword>
<keyword id="KW-0441">Lipid A biosynthesis</keyword>
<keyword id="KW-0444">Lipid biosynthesis</keyword>
<keyword id="KW-0443">Lipid metabolism</keyword>
<keyword id="KW-0547">Nucleotide-binding</keyword>
<keyword id="KW-1185">Reference proteome</keyword>
<keyword id="KW-0808">Transferase</keyword>
<sequence>MREPAFWYRPRSPESQILRPLGALYGAITARRMALQGFDAGIPVICVGNYHVGGAGKTPTVLALTKLLRELGETPVVLSRGYGGRLQGPVMVDGARHIAADVGDEPLMMARDVPVVVARDRLDGVALAKSQGATVILMDDGFQNPRLLKDASLIVIDSERGIGNGKVFPAGPLRAPLKAQLARTDALVLIGDGRAANDVAAELAKRNKPELRARLKPDAASVAQLFGKRVFAFAGIGDPERFFRTLRASGIDVARTRRFDDHHMFSPEEIAALAAEAQREQLTLVTTEKDLARLRGSEGVPNGIVPFAVQLEFDDPAKLRQLISDHLYKARERRFGRR</sequence>
<reference key="1">
    <citation type="journal article" date="2002" name="DNA Res.">
        <title>Complete genomic sequence of nitrogen-fixing symbiotic bacterium Bradyrhizobium japonicum USDA110.</title>
        <authorList>
            <person name="Kaneko T."/>
            <person name="Nakamura Y."/>
            <person name="Sato S."/>
            <person name="Minamisawa K."/>
            <person name="Uchiumi T."/>
            <person name="Sasamoto S."/>
            <person name="Watanabe A."/>
            <person name="Idesawa K."/>
            <person name="Iriguchi M."/>
            <person name="Kawashima K."/>
            <person name="Kohara M."/>
            <person name="Matsumoto M."/>
            <person name="Shimpo S."/>
            <person name="Tsuruoka H."/>
            <person name="Wada T."/>
            <person name="Yamada M."/>
            <person name="Tabata S."/>
        </authorList>
    </citation>
    <scope>NUCLEOTIDE SEQUENCE [LARGE SCALE GENOMIC DNA]</scope>
    <source>
        <strain>JCM 10833 / BCRC 13528 / IAM 13628 / NBRC 14792 / USDA 110</strain>
    </source>
</reference>
<proteinExistence type="inferred from homology"/>
<name>LPXK_BRADU</name>
<organism>
    <name type="scientific">Bradyrhizobium diazoefficiens (strain JCM 10833 / BCRC 13528 / IAM 13628 / NBRC 14792 / USDA 110)</name>
    <dbReference type="NCBI Taxonomy" id="224911"/>
    <lineage>
        <taxon>Bacteria</taxon>
        <taxon>Pseudomonadati</taxon>
        <taxon>Pseudomonadota</taxon>
        <taxon>Alphaproteobacteria</taxon>
        <taxon>Hyphomicrobiales</taxon>
        <taxon>Nitrobacteraceae</taxon>
        <taxon>Bradyrhizobium</taxon>
    </lineage>
</organism>
<gene>
    <name evidence="1" type="primary">lpxK</name>
    <name type="ordered locus">bll7514</name>
</gene>
<feature type="chain" id="PRO_0000190913" description="Tetraacyldisaccharide 4'-kinase">
    <location>
        <begin position="1"/>
        <end position="338"/>
    </location>
</feature>
<feature type="binding site" evidence="1">
    <location>
        <begin position="51"/>
        <end position="58"/>
    </location>
    <ligand>
        <name>ATP</name>
        <dbReference type="ChEBI" id="CHEBI:30616"/>
    </ligand>
</feature>
<evidence type="ECO:0000255" key="1">
    <source>
        <dbReference type="HAMAP-Rule" id="MF_00409"/>
    </source>
</evidence>
<comment type="function">
    <text evidence="1">Transfers the gamma-phosphate of ATP to the 4'-position of a tetraacyldisaccharide 1-phosphate intermediate (termed DS-1-P) to form tetraacyldisaccharide 1,4'-bis-phosphate (lipid IVA).</text>
</comment>
<comment type="catalytic activity">
    <reaction evidence="1">
        <text>a lipid A disaccharide + ATP = a lipid IVA + ADP + H(+)</text>
        <dbReference type="Rhea" id="RHEA:67840"/>
        <dbReference type="ChEBI" id="CHEBI:15378"/>
        <dbReference type="ChEBI" id="CHEBI:30616"/>
        <dbReference type="ChEBI" id="CHEBI:176343"/>
        <dbReference type="ChEBI" id="CHEBI:176425"/>
        <dbReference type="ChEBI" id="CHEBI:456216"/>
        <dbReference type="EC" id="2.7.1.130"/>
    </reaction>
</comment>
<comment type="pathway">
    <text evidence="1">Glycolipid biosynthesis; lipid IV(A) biosynthesis; lipid IV(A) from (3R)-3-hydroxytetradecanoyl-[acyl-carrier-protein] and UDP-N-acetyl-alpha-D-glucosamine: step 6/6.</text>
</comment>
<comment type="similarity">
    <text evidence="1">Belongs to the LpxK family.</text>
</comment>
<dbReference type="EC" id="2.7.1.130" evidence="1"/>
<dbReference type="EMBL" id="BA000040">
    <property type="protein sequence ID" value="BAC52779.1"/>
    <property type="molecule type" value="Genomic_DNA"/>
</dbReference>
<dbReference type="RefSeq" id="NP_774154.1">
    <property type="nucleotide sequence ID" value="NC_004463.1"/>
</dbReference>
<dbReference type="RefSeq" id="WP_011090246.1">
    <property type="nucleotide sequence ID" value="NC_004463.1"/>
</dbReference>
<dbReference type="SMR" id="Q89DC5"/>
<dbReference type="FunCoup" id="Q89DC5">
    <property type="interactions" value="277"/>
</dbReference>
<dbReference type="STRING" id="224911.AAV28_35245"/>
<dbReference type="EnsemblBacteria" id="BAC52779">
    <property type="protein sequence ID" value="BAC52779"/>
    <property type="gene ID" value="BAC52779"/>
</dbReference>
<dbReference type="GeneID" id="46494467"/>
<dbReference type="KEGG" id="bja:bll7514"/>
<dbReference type="PATRIC" id="fig|224911.44.peg.7617"/>
<dbReference type="eggNOG" id="COG1663">
    <property type="taxonomic scope" value="Bacteria"/>
</dbReference>
<dbReference type="HOGENOM" id="CLU_038816_0_0_5"/>
<dbReference type="InParanoid" id="Q89DC5"/>
<dbReference type="OrthoDB" id="9766423at2"/>
<dbReference type="PhylomeDB" id="Q89DC5"/>
<dbReference type="UniPathway" id="UPA00359">
    <property type="reaction ID" value="UER00482"/>
</dbReference>
<dbReference type="Proteomes" id="UP000002526">
    <property type="component" value="Chromosome"/>
</dbReference>
<dbReference type="GO" id="GO:0005886">
    <property type="term" value="C:plasma membrane"/>
    <property type="evidence" value="ECO:0000318"/>
    <property type="project" value="GO_Central"/>
</dbReference>
<dbReference type="GO" id="GO:0005524">
    <property type="term" value="F:ATP binding"/>
    <property type="evidence" value="ECO:0007669"/>
    <property type="project" value="UniProtKB-UniRule"/>
</dbReference>
<dbReference type="GO" id="GO:0009029">
    <property type="term" value="F:tetraacyldisaccharide 4'-kinase activity"/>
    <property type="evidence" value="ECO:0000318"/>
    <property type="project" value="GO_Central"/>
</dbReference>
<dbReference type="GO" id="GO:0009245">
    <property type="term" value="P:lipid A biosynthetic process"/>
    <property type="evidence" value="ECO:0000318"/>
    <property type="project" value="GO_Central"/>
</dbReference>
<dbReference type="GO" id="GO:0009244">
    <property type="term" value="P:lipopolysaccharide core region biosynthetic process"/>
    <property type="evidence" value="ECO:0000318"/>
    <property type="project" value="GO_Central"/>
</dbReference>
<dbReference type="HAMAP" id="MF_00409">
    <property type="entry name" value="LpxK"/>
    <property type="match status" value="1"/>
</dbReference>
<dbReference type="InterPro" id="IPR003758">
    <property type="entry name" value="LpxK"/>
</dbReference>
<dbReference type="InterPro" id="IPR027417">
    <property type="entry name" value="P-loop_NTPase"/>
</dbReference>
<dbReference type="NCBIfam" id="TIGR00682">
    <property type="entry name" value="lpxK"/>
    <property type="match status" value="1"/>
</dbReference>
<dbReference type="PANTHER" id="PTHR42724">
    <property type="entry name" value="TETRAACYLDISACCHARIDE 4'-KINASE"/>
    <property type="match status" value="1"/>
</dbReference>
<dbReference type="PANTHER" id="PTHR42724:SF1">
    <property type="entry name" value="TETRAACYLDISACCHARIDE 4'-KINASE, MITOCHONDRIAL-RELATED"/>
    <property type="match status" value="1"/>
</dbReference>
<dbReference type="Pfam" id="PF02606">
    <property type="entry name" value="LpxK"/>
    <property type="match status" value="1"/>
</dbReference>
<dbReference type="SUPFAM" id="SSF52540">
    <property type="entry name" value="P-loop containing nucleoside triphosphate hydrolases"/>
    <property type="match status" value="1"/>
</dbReference>